<dbReference type="EC" id="4.2.1.10" evidence="1"/>
<dbReference type="EMBL" id="CP000939">
    <property type="protein sequence ID" value="ACA44232.1"/>
    <property type="molecule type" value="Genomic_DNA"/>
</dbReference>
<dbReference type="RefSeq" id="WP_015957601.1">
    <property type="nucleotide sequence ID" value="NC_010516.1"/>
</dbReference>
<dbReference type="SMR" id="B1IMQ1"/>
<dbReference type="KEGG" id="cbb:CLD_2739"/>
<dbReference type="HOGENOM" id="CLU_090968_2_0_9"/>
<dbReference type="UniPathway" id="UPA00053">
    <property type="reaction ID" value="UER00086"/>
</dbReference>
<dbReference type="Proteomes" id="UP000008541">
    <property type="component" value="Chromosome"/>
</dbReference>
<dbReference type="GO" id="GO:0003855">
    <property type="term" value="F:3-dehydroquinate dehydratase activity"/>
    <property type="evidence" value="ECO:0007669"/>
    <property type="project" value="UniProtKB-UniRule"/>
</dbReference>
<dbReference type="GO" id="GO:0008652">
    <property type="term" value="P:amino acid biosynthetic process"/>
    <property type="evidence" value="ECO:0007669"/>
    <property type="project" value="UniProtKB-KW"/>
</dbReference>
<dbReference type="GO" id="GO:0009073">
    <property type="term" value="P:aromatic amino acid family biosynthetic process"/>
    <property type="evidence" value="ECO:0007669"/>
    <property type="project" value="UniProtKB-KW"/>
</dbReference>
<dbReference type="GO" id="GO:0009423">
    <property type="term" value="P:chorismate biosynthetic process"/>
    <property type="evidence" value="ECO:0007669"/>
    <property type="project" value="UniProtKB-UniRule"/>
</dbReference>
<dbReference type="GO" id="GO:0019631">
    <property type="term" value="P:quinate catabolic process"/>
    <property type="evidence" value="ECO:0007669"/>
    <property type="project" value="TreeGrafter"/>
</dbReference>
<dbReference type="CDD" id="cd00466">
    <property type="entry name" value="DHQase_II"/>
    <property type="match status" value="1"/>
</dbReference>
<dbReference type="Gene3D" id="3.40.50.9100">
    <property type="entry name" value="Dehydroquinase, class II"/>
    <property type="match status" value="1"/>
</dbReference>
<dbReference type="HAMAP" id="MF_00169">
    <property type="entry name" value="AroQ"/>
    <property type="match status" value="1"/>
</dbReference>
<dbReference type="InterPro" id="IPR001874">
    <property type="entry name" value="DHquinase_II"/>
</dbReference>
<dbReference type="InterPro" id="IPR018509">
    <property type="entry name" value="DHquinase_II_CS"/>
</dbReference>
<dbReference type="InterPro" id="IPR036441">
    <property type="entry name" value="DHquinase_II_sf"/>
</dbReference>
<dbReference type="NCBIfam" id="TIGR01088">
    <property type="entry name" value="aroQ"/>
    <property type="match status" value="1"/>
</dbReference>
<dbReference type="NCBIfam" id="NF003805">
    <property type="entry name" value="PRK05395.1-2"/>
    <property type="match status" value="1"/>
</dbReference>
<dbReference type="NCBIfam" id="NF003806">
    <property type="entry name" value="PRK05395.1-3"/>
    <property type="match status" value="1"/>
</dbReference>
<dbReference type="NCBIfam" id="NF003807">
    <property type="entry name" value="PRK05395.1-4"/>
    <property type="match status" value="1"/>
</dbReference>
<dbReference type="PANTHER" id="PTHR21272">
    <property type="entry name" value="CATABOLIC 3-DEHYDROQUINASE"/>
    <property type="match status" value="1"/>
</dbReference>
<dbReference type="PANTHER" id="PTHR21272:SF3">
    <property type="entry name" value="CATABOLIC 3-DEHYDROQUINASE"/>
    <property type="match status" value="1"/>
</dbReference>
<dbReference type="Pfam" id="PF01220">
    <property type="entry name" value="DHquinase_II"/>
    <property type="match status" value="1"/>
</dbReference>
<dbReference type="PIRSF" id="PIRSF001399">
    <property type="entry name" value="DHquinase_II"/>
    <property type="match status" value="1"/>
</dbReference>
<dbReference type="SUPFAM" id="SSF52304">
    <property type="entry name" value="Type II 3-dehydroquinate dehydratase"/>
    <property type="match status" value="1"/>
</dbReference>
<dbReference type="PROSITE" id="PS01029">
    <property type="entry name" value="DEHYDROQUINASE_II"/>
    <property type="match status" value="1"/>
</dbReference>
<reference key="1">
    <citation type="journal article" date="2007" name="PLoS ONE">
        <title>Analysis of the neurotoxin complex genes in Clostridium botulinum A1-A4 and B1 strains: BoNT/A3, /Ba4 and /B1 clusters are located within plasmids.</title>
        <authorList>
            <person name="Smith T.J."/>
            <person name="Hill K.K."/>
            <person name="Foley B.T."/>
            <person name="Detter J.C."/>
            <person name="Munk A.C."/>
            <person name="Bruce D.C."/>
            <person name="Doggett N.A."/>
            <person name="Smith L.A."/>
            <person name="Marks J.D."/>
            <person name="Xie G."/>
            <person name="Brettin T.S."/>
        </authorList>
    </citation>
    <scope>NUCLEOTIDE SEQUENCE [LARGE SCALE GENOMIC DNA]</scope>
    <source>
        <strain>Okra / Type B1</strain>
    </source>
</reference>
<evidence type="ECO:0000255" key="1">
    <source>
        <dbReference type="HAMAP-Rule" id="MF_00169"/>
    </source>
</evidence>
<organism>
    <name type="scientific">Clostridium botulinum (strain Okra / Type B1)</name>
    <dbReference type="NCBI Taxonomy" id="498213"/>
    <lineage>
        <taxon>Bacteria</taxon>
        <taxon>Bacillati</taxon>
        <taxon>Bacillota</taxon>
        <taxon>Clostridia</taxon>
        <taxon>Eubacteriales</taxon>
        <taxon>Clostridiaceae</taxon>
        <taxon>Clostridium</taxon>
    </lineage>
</organism>
<accession>B1IMQ1</accession>
<feature type="chain" id="PRO_1000203670" description="3-dehydroquinate dehydratase">
    <location>
        <begin position="1"/>
        <end position="147"/>
    </location>
</feature>
<feature type="active site" description="Proton acceptor" evidence="1">
    <location>
        <position position="23"/>
    </location>
</feature>
<feature type="active site" description="Proton donor" evidence="1">
    <location>
        <position position="100"/>
    </location>
</feature>
<feature type="binding site" evidence="1">
    <location>
        <position position="74"/>
    </location>
    <ligand>
        <name>substrate</name>
    </ligand>
</feature>
<feature type="binding site" evidence="1">
    <location>
        <position position="80"/>
    </location>
    <ligand>
        <name>substrate</name>
    </ligand>
</feature>
<feature type="binding site" evidence="1">
    <location>
        <position position="87"/>
    </location>
    <ligand>
        <name>substrate</name>
    </ligand>
</feature>
<feature type="binding site" evidence="1">
    <location>
        <begin position="101"/>
        <end position="102"/>
    </location>
    <ligand>
        <name>substrate</name>
    </ligand>
</feature>
<feature type="binding site" evidence="1">
    <location>
        <position position="111"/>
    </location>
    <ligand>
        <name>substrate</name>
    </ligand>
</feature>
<feature type="site" description="Transition state stabilizer" evidence="1">
    <location>
        <position position="18"/>
    </location>
</feature>
<gene>
    <name evidence="1" type="primary">aroQ</name>
    <name type="ordered locus">CLD_2739</name>
</gene>
<keyword id="KW-0028">Amino-acid biosynthesis</keyword>
<keyword id="KW-0057">Aromatic amino acid biosynthesis</keyword>
<keyword id="KW-0456">Lyase</keyword>
<name>AROQ_CLOBK</name>
<comment type="function">
    <text evidence="1">Catalyzes a trans-dehydration via an enolate intermediate.</text>
</comment>
<comment type="catalytic activity">
    <reaction evidence="1">
        <text>3-dehydroquinate = 3-dehydroshikimate + H2O</text>
        <dbReference type="Rhea" id="RHEA:21096"/>
        <dbReference type="ChEBI" id="CHEBI:15377"/>
        <dbReference type="ChEBI" id="CHEBI:16630"/>
        <dbReference type="ChEBI" id="CHEBI:32364"/>
        <dbReference type="EC" id="4.2.1.10"/>
    </reaction>
</comment>
<comment type="pathway">
    <text evidence="1">Metabolic intermediate biosynthesis; chorismate biosynthesis; chorismate from D-erythrose 4-phosphate and phosphoenolpyruvate: step 3/7.</text>
</comment>
<comment type="subunit">
    <text evidence="1">Homododecamer.</text>
</comment>
<comment type="similarity">
    <text evidence="1">Belongs to the type-II 3-dehydroquinase family.</text>
</comment>
<protein>
    <recommendedName>
        <fullName evidence="1">3-dehydroquinate dehydratase</fullName>
        <shortName evidence="1">3-dehydroquinase</shortName>
        <ecNumber evidence="1">4.2.1.10</ecNumber>
    </recommendedName>
    <alternativeName>
        <fullName evidence="1">Type II DHQase</fullName>
    </alternativeName>
</protein>
<proteinExistence type="inferred from homology"/>
<sequence length="147" mass="16873">MNNILVINGPNLNLLGKREPDIYGNITLENINQKIKLHFKNEDLKIHFFQSNEEGKIIDKIIESEKKYNAIVINPAAYSHYSIAILDAMRSINIPVVEVHLSNIYKREEYRKKSVTAEASLGVISGFGYYGYIMAIEFILNNLVREK</sequence>